<reference key="1">
    <citation type="journal article" date="2005" name="Nucleic Acids Res.">
        <title>The genome sequence of Salmonella enterica serovar Choleraesuis, a highly invasive and resistant zoonotic pathogen.</title>
        <authorList>
            <person name="Chiu C.-H."/>
            <person name="Tang P."/>
            <person name="Chu C."/>
            <person name="Hu S."/>
            <person name="Bao Q."/>
            <person name="Yu J."/>
            <person name="Chou Y.-Y."/>
            <person name="Wang H.-S."/>
            <person name="Lee Y.-S."/>
        </authorList>
    </citation>
    <scope>NUCLEOTIDE SEQUENCE [LARGE SCALE GENOMIC DNA]</scope>
    <source>
        <strain>SC-B67</strain>
    </source>
</reference>
<keyword id="KW-0067">ATP-binding</keyword>
<keyword id="KW-0963">Cytoplasm</keyword>
<keyword id="KW-0418">Kinase</keyword>
<keyword id="KW-0444">Lipid biosynthesis</keyword>
<keyword id="KW-0443">Lipid metabolism</keyword>
<keyword id="KW-0460">Magnesium</keyword>
<keyword id="KW-0479">Metal-binding</keyword>
<keyword id="KW-0547">Nucleotide-binding</keyword>
<keyword id="KW-0594">Phospholipid biosynthesis</keyword>
<keyword id="KW-1208">Phospholipid metabolism</keyword>
<keyword id="KW-0808">Transferase</keyword>
<gene>
    <name evidence="1" type="primary">yegS</name>
    <name type="ordered locus">SCH_2155</name>
</gene>
<proteinExistence type="inferred from homology"/>
<organism>
    <name type="scientific">Salmonella choleraesuis (strain SC-B67)</name>
    <dbReference type="NCBI Taxonomy" id="321314"/>
    <lineage>
        <taxon>Bacteria</taxon>
        <taxon>Pseudomonadati</taxon>
        <taxon>Pseudomonadota</taxon>
        <taxon>Gammaproteobacteria</taxon>
        <taxon>Enterobacterales</taxon>
        <taxon>Enterobacteriaceae</taxon>
        <taxon>Salmonella</taxon>
    </lineage>
</organism>
<sequence>MANFPASLLILNGKSADNQPLREAITLLRDEGIQIHVRVTWEKGDAQRYVDEARRLGVETVIAGGGDGTINEVSTALIQIRDGVAPALGLLPLGTANDFATSAGIPEALDKALKLAIAGNAMEIDMAMVNDKTCFINMATGGFGTRITTETPEKLKAALGGVSYLIHGLMRMDTLTPDRCEIRGENFHWQGDALVIGIGNGRQAGGGQQLCPTALINDGLLQLRIFTGEELLPALFSTLTQSDDNPNIIDGASAWFDIHAPHEITFNLDGEPLSGQEFHIEVLPGALRCRLPPDCPLLR</sequence>
<accession>Q57MK0</accession>
<name>YEGS_SALCH</name>
<evidence type="ECO:0000255" key="1">
    <source>
        <dbReference type="HAMAP-Rule" id="MF_01377"/>
    </source>
</evidence>
<comment type="function">
    <text evidence="1">Probably phosphorylates lipids; the in vivo substrate is unknown.</text>
</comment>
<comment type="cofactor">
    <cofactor evidence="1">
        <name>Mg(2+)</name>
        <dbReference type="ChEBI" id="CHEBI:18420"/>
    </cofactor>
    <cofactor evidence="1">
        <name>Ca(2+)</name>
        <dbReference type="ChEBI" id="CHEBI:29108"/>
    </cofactor>
    <text evidence="1">Binds 1 Mg(2+) ion per subunit. Ca(2+) may be able to substitute.</text>
</comment>
<comment type="subcellular location">
    <subcellularLocation>
        <location evidence="1">Cytoplasm</location>
    </subcellularLocation>
</comment>
<comment type="similarity">
    <text evidence="1">Belongs to the diacylglycerol/lipid kinase family. YegS lipid kinase subfamily.</text>
</comment>
<feature type="chain" id="PRO_0000292155" description="Probable lipid kinase YegS">
    <location>
        <begin position="1"/>
        <end position="299"/>
    </location>
</feature>
<feature type="domain" description="DAGKc" evidence="1">
    <location>
        <begin position="2"/>
        <end position="133"/>
    </location>
</feature>
<feature type="active site" description="Proton acceptor" evidence="1">
    <location>
        <position position="271"/>
    </location>
</feature>
<feature type="binding site" evidence="1">
    <location>
        <position position="40"/>
    </location>
    <ligand>
        <name>ATP</name>
        <dbReference type="ChEBI" id="CHEBI:30616"/>
    </ligand>
</feature>
<feature type="binding site" evidence="1">
    <location>
        <begin position="66"/>
        <end position="72"/>
    </location>
    <ligand>
        <name>ATP</name>
        <dbReference type="ChEBI" id="CHEBI:30616"/>
    </ligand>
</feature>
<feature type="binding site" evidence="1">
    <location>
        <position position="95"/>
    </location>
    <ligand>
        <name>ATP</name>
        <dbReference type="ChEBI" id="CHEBI:30616"/>
    </ligand>
</feature>
<feature type="binding site" evidence="1">
    <location>
        <position position="215"/>
    </location>
    <ligand>
        <name>Mg(2+)</name>
        <dbReference type="ChEBI" id="CHEBI:18420"/>
    </ligand>
</feature>
<feature type="binding site" evidence="1">
    <location>
        <position position="218"/>
    </location>
    <ligand>
        <name>Mg(2+)</name>
        <dbReference type="ChEBI" id="CHEBI:18420"/>
    </ligand>
</feature>
<feature type="binding site" evidence="1">
    <location>
        <position position="220"/>
    </location>
    <ligand>
        <name>Mg(2+)</name>
        <dbReference type="ChEBI" id="CHEBI:18420"/>
    </ligand>
</feature>
<protein>
    <recommendedName>
        <fullName evidence="1">Probable lipid kinase YegS</fullName>
        <ecNumber evidence="1">2.7.1.-</ecNumber>
    </recommendedName>
</protein>
<dbReference type="EC" id="2.7.1.-" evidence="1"/>
<dbReference type="EMBL" id="AE017220">
    <property type="protein sequence ID" value="AAX66061.1"/>
    <property type="molecule type" value="Genomic_DNA"/>
</dbReference>
<dbReference type="RefSeq" id="WP_001273389.1">
    <property type="nucleotide sequence ID" value="NC_006905.1"/>
</dbReference>
<dbReference type="SMR" id="Q57MK0"/>
<dbReference type="KEGG" id="sec:SCH_2155"/>
<dbReference type="HOGENOM" id="CLU_045532_1_1_6"/>
<dbReference type="Proteomes" id="UP000000538">
    <property type="component" value="Chromosome"/>
</dbReference>
<dbReference type="GO" id="GO:0005737">
    <property type="term" value="C:cytoplasm"/>
    <property type="evidence" value="ECO:0007669"/>
    <property type="project" value="UniProtKB-SubCell"/>
</dbReference>
<dbReference type="GO" id="GO:0005886">
    <property type="term" value="C:plasma membrane"/>
    <property type="evidence" value="ECO:0007669"/>
    <property type="project" value="TreeGrafter"/>
</dbReference>
<dbReference type="GO" id="GO:0005524">
    <property type="term" value="F:ATP binding"/>
    <property type="evidence" value="ECO:0007669"/>
    <property type="project" value="UniProtKB-UniRule"/>
</dbReference>
<dbReference type="GO" id="GO:0001727">
    <property type="term" value="F:lipid kinase activity"/>
    <property type="evidence" value="ECO:0007669"/>
    <property type="project" value="UniProtKB-UniRule"/>
</dbReference>
<dbReference type="GO" id="GO:0000287">
    <property type="term" value="F:magnesium ion binding"/>
    <property type="evidence" value="ECO:0007669"/>
    <property type="project" value="UniProtKB-UniRule"/>
</dbReference>
<dbReference type="GO" id="GO:0008654">
    <property type="term" value="P:phospholipid biosynthetic process"/>
    <property type="evidence" value="ECO:0007669"/>
    <property type="project" value="UniProtKB-UniRule"/>
</dbReference>
<dbReference type="FunFam" id="3.40.50.10330:FF:000008">
    <property type="entry name" value="Probable lipid kinase YegS"/>
    <property type="match status" value="1"/>
</dbReference>
<dbReference type="Gene3D" id="2.60.200.40">
    <property type="match status" value="1"/>
</dbReference>
<dbReference type="Gene3D" id="3.40.50.10330">
    <property type="entry name" value="Probable inorganic polyphosphate/atp-NAD kinase, domain 1"/>
    <property type="match status" value="1"/>
</dbReference>
<dbReference type="HAMAP" id="MF_01377">
    <property type="entry name" value="YegS"/>
    <property type="match status" value="1"/>
</dbReference>
<dbReference type="InterPro" id="IPR017438">
    <property type="entry name" value="ATP-NAD_kinase_N"/>
</dbReference>
<dbReference type="InterPro" id="IPR005218">
    <property type="entry name" value="Diacylglycerol/lipid_kinase"/>
</dbReference>
<dbReference type="InterPro" id="IPR001206">
    <property type="entry name" value="Diacylglycerol_kinase_cat_dom"/>
</dbReference>
<dbReference type="InterPro" id="IPR022433">
    <property type="entry name" value="Lip_kinase_YegS"/>
</dbReference>
<dbReference type="InterPro" id="IPR050187">
    <property type="entry name" value="Lipid_Phosphate_FormReg"/>
</dbReference>
<dbReference type="InterPro" id="IPR016064">
    <property type="entry name" value="NAD/diacylglycerol_kinase_sf"/>
</dbReference>
<dbReference type="InterPro" id="IPR045540">
    <property type="entry name" value="YegS/DAGK_C"/>
</dbReference>
<dbReference type="NCBIfam" id="TIGR03702">
    <property type="entry name" value="lip_kinase_YegS"/>
    <property type="match status" value="1"/>
</dbReference>
<dbReference type="NCBIfam" id="NF009602">
    <property type="entry name" value="PRK13054.1"/>
    <property type="match status" value="1"/>
</dbReference>
<dbReference type="NCBIfam" id="TIGR00147">
    <property type="entry name" value="YegS/Rv2252/BmrU family lipid kinase"/>
    <property type="match status" value="1"/>
</dbReference>
<dbReference type="PANTHER" id="PTHR12358:SF106">
    <property type="entry name" value="LIPID KINASE YEGS"/>
    <property type="match status" value="1"/>
</dbReference>
<dbReference type="PANTHER" id="PTHR12358">
    <property type="entry name" value="SPHINGOSINE KINASE"/>
    <property type="match status" value="1"/>
</dbReference>
<dbReference type="Pfam" id="PF00781">
    <property type="entry name" value="DAGK_cat"/>
    <property type="match status" value="1"/>
</dbReference>
<dbReference type="Pfam" id="PF19279">
    <property type="entry name" value="YegS_C"/>
    <property type="match status" value="1"/>
</dbReference>
<dbReference type="SMART" id="SM00046">
    <property type="entry name" value="DAGKc"/>
    <property type="match status" value="1"/>
</dbReference>
<dbReference type="SUPFAM" id="SSF111331">
    <property type="entry name" value="NAD kinase/diacylglycerol kinase-like"/>
    <property type="match status" value="1"/>
</dbReference>
<dbReference type="PROSITE" id="PS50146">
    <property type="entry name" value="DAGK"/>
    <property type="match status" value="1"/>
</dbReference>